<evidence type="ECO:0000255" key="1">
    <source>
        <dbReference type="HAMAP-Rule" id="MF_01077"/>
    </source>
</evidence>
<reference key="1">
    <citation type="journal article" date="2008" name="PLoS ONE">
        <title>Comparative analysis of Acinetobacters: three genomes for three lifestyles.</title>
        <authorList>
            <person name="Vallenet D."/>
            <person name="Nordmann P."/>
            <person name="Barbe V."/>
            <person name="Poirel L."/>
            <person name="Mangenot S."/>
            <person name="Bataille E."/>
            <person name="Dossat C."/>
            <person name="Gas S."/>
            <person name="Kreimeyer A."/>
            <person name="Lenoble P."/>
            <person name="Oztas S."/>
            <person name="Poulain J."/>
            <person name="Segurens B."/>
            <person name="Robert C."/>
            <person name="Abergel C."/>
            <person name="Claverie J.-M."/>
            <person name="Raoult D."/>
            <person name="Medigue C."/>
            <person name="Weissenbach J."/>
            <person name="Cruveiller S."/>
        </authorList>
    </citation>
    <scope>NUCLEOTIDE SEQUENCE [LARGE SCALE GENOMIC DNA]</scope>
    <source>
        <strain>SDF</strain>
    </source>
</reference>
<keyword id="KW-0963">Cytoplasm</keyword>
<keyword id="KW-0690">Ribosome biogenesis</keyword>
<feature type="chain" id="PRO_1000136724" description="Ribosome maturation factor RimP">
    <location>
        <begin position="1"/>
        <end position="174"/>
    </location>
</feature>
<dbReference type="EMBL" id="CU468230">
    <property type="protein sequence ID" value="CAP02460.1"/>
    <property type="molecule type" value="Genomic_DNA"/>
</dbReference>
<dbReference type="SMR" id="B0VLU4"/>
<dbReference type="KEGG" id="abm:ABSDF3182"/>
<dbReference type="HOGENOM" id="CLU_070525_1_1_6"/>
<dbReference type="Proteomes" id="UP000001741">
    <property type="component" value="Chromosome"/>
</dbReference>
<dbReference type="GO" id="GO:0005829">
    <property type="term" value="C:cytosol"/>
    <property type="evidence" value="ECO:0007669"/>
    <property type="project" value="TreeGrafter"/>
</dbReference>
<dbReference type="GO" id="GO:0000028">
    <property type="term" value="P:ribosomal small subunit assembly"/>
    <property type="evidence" value="ECO:0007669"/>
    <property type="project" value="TreeGrafter"/>
</dbReference>
<dbReference type="GO" id="GO:0006412">
    <property type="term" value="P:translation"/>
    <property type="evidence" value="ECO:0007669"/>
    <property type="project" value="TreeGrafter"/>
</dbReference>
<dbReference type="CDD" id="cd01734">
    <property type="entry name" value="YlxS_C"/>
    <property type="match status" value="1"/>
</dbReference>
<dbReference type="FunFam" id="3.30.300.70:FF:000001">
    <property type="entry name" value="Ribosome maturation factor RimP"/>
    <property type="match status" value="1"/>
</dbReference>
<dbReference type="Gene3D" id="2.30.30.180">
    <property type="entry name" value="Ribosome maturation factor RimP, C-terminal domain"/>
    <property type="match status" value="1"/>
</dbReference>
<dbReference type="Gene3D" id="3.30.300.70">
    <property type="entry name" value="RimP-like superfamily, N-terminal"/>
    <property type="match status" value="1"/>
</dbReference>
<dbReference type="HAMAP" id="MF_01077">
    <property type="entry name" value="RimP"/>
    <property type="match status" value="1"/>
</dbReference>
<dbReference type="InterPro" id="IPR003728">
    <property type="entry name" value="Ribosome_maturation_RimP"/>
</dbReference>
<dbReference type="InterPro" id="IPR028998">
    <property type="entry name" value="RimP_C"/>
</dbReference>
<dbReference type="InterPro" id="IPR036847">
    <property type="entry name" value="RimP_C_sf"/>
</dbReference>
<dbReference type="InterPro" id="IPR028989">
    <property type="entry name" value="RimP_N"/>
</dbReference>
<dbReference type="InterPro" id="IPR035956">
    <property type="entry name" value="RimP_N_sf"/>
</dbReference>
<dbReference type="NCBIfam" id="NF011224">
    <property type="entry name" value="PRK14631.1"/>
    <property type="match status" value="1"/>
</dbReference>
<dbReference type="PANTHER" id="PTHR33867">
    <property type="entry name" value="RIBOSOME MATURATION FACTOR RIMP"/>
    <property type="match status" value="1"/>
</dbReference>
<dbReference type="PANTHER" id="PTHR33867:SF1">
    <property type="entry name" value="RIBOSOME MATURATION FACTOR RIMP"/>
    <property type="match status" value="1"/>
</dbReference>
<dbReference type="Pfam" id="PF17384">
    <property type="entry name" value="DUF150_C"/>
    <property type="match status" value="1"/>
</dbReference>
<dbReference type="Pfam" id="PF02576">
    <property type="entry name" value="RimP_N"/>
    <property type="match status" value="1"/>
</dbReference>
<dbReference type="SUPFAM" id="SSF74942">
    <property type="entry name" value="YhbC-like, C-terminal domain"/>
    <property type="match status" value="1"/>
</dbReference>
<dbReference type="SUPFAM" id="SSF75420">
    <property type="entry name" value="YhbC-like, N-terminal domain"/>
    <property type="match status" value="1"/>
</dbReference>
<comment type="function">
    <text evidence="1">Required for maturation of 30S ribosomal subunits.</text>
</comment>
<comment type="subcellular location">
    <subcellularLocation>
        <location evidence="1">Cytoplasm</location>
    </subcellularLocation>
</comment>
<comment type="similarity">
    <text evidence="1">Belongs to the RimP family.</text>
</comment>
<organism>
    <name type="scientific">Acinetobacter baumannii (strain SDF)</name>
    <dbReference type="NCBI Taxonomy" id="509170"/>
    <lineage>
        <taxon>Bacteria</taxon>
        <taxon>Pseudomonadati</taxon>
        <taxon>Pseudomonadota</taxon>
        <taxon>Gammaproteobacteria</taxon>
        <taxon>Moraxellales</taxon>
        <taxon>Moraxellaceae</taxon>
        <taxon>Acinetobacter</taxon>
        <taxon>Acinetobacter calcoaceticus/baumannii complex</taxon>
    </lineage>
</organism>
<sequence length="174" mass="19497">MKLSNKSQALYDMIAPAVEACGVDLWGIEFLPQGKRSLLRIYIDRTVDENAEPVINEDGEVEQGRGIGVEDCVRVTQQVGAMLDVHDPISGEYALEVSSPGWDRPFFQLEQLQGYIGQQVALRLIAAVENRRKFQAKLLAVDLENEEIQVEVEGKHVLDIDSNNIDKANLIYQD</sequence>
<protein>
    <recommendedName>
        <fullName evidence="1">Ribosome maturation factor RimP</fullName>
    </recommendedName>
</protein>
<accession>B0VLU4</accession>
<gene>
    <name evidence="1" type="primary">rimP</name>
    <name type="ordered locus">ABSDF3182</name>
</gene>
<name>RIMP_ACIBS</name>
<proteinExistence type="inferred from homology"/>